<comment type="function">
    <text evidence="1">Catalyzes the methylthiolation of an aspartic acid residue of ribosomal protein uS12.</text>
</comment>
<comment type="catalytic activity">
    <reaction evidence="1">
        <text>L-aspartate(89)-[ribosomal protein uS12]-hydrogen + (sulfur carrier)-SH + AH2 + 2 S-adenosyl-L-methionine = 3-methylsulfanyl-L-aspartate(89)-[ribosomal protein uS12]-hydrogen + (sulfur carrier)-H + 5'-deoxyadenosine + L-methionine + A + S-adenosyl-L-homocysteine + 2 H(+)</text>
        <dbReference type="Rhea" id="RHEA:37087"/>
        <dbReference type="Rhea" id="RHEA-COMP:10460"/>
        <dbReference type="Rhea" id="RHEA-COMP:10461"/>
        <dbReference type="Rhea" id="RHEA-COMP:14737"/>
        <dbReference type="Rhea" id="RHEA-COMP:14739"/>
        <dbReference type="ChEBI" id="CHEBI:13193"/>
        <dbReference type="ChEBI" id="CHEBI:15378"/>
        <dbReference type="ChEBI" id="CHEBI:17319"/>
        <dbReference type="ChEBI" id="CHEBI:17499"/>
        <dbReference type="ChEBI" id="CHEBI:29917"/>
        <dbReference type="ChEBI" id="CHEBI:29961"/>
        <dbReference type="ChEBI" id="CHEBI:57844"/>
        <dbReference type="ChEBI" id="CHEBI:57856"/>
        <dbReference type="ChEBI" id="CHEBI:59789"/>
        <dbReference type="ChEBI" id="CHEBI:64428"/>
        <dbReference type="ChEBI" id="CHEBI:73599"/>
        <dbReference type="EC" id="2.8.4.4"/>
    </reaction>
</comment>
<comment type="cofactor">
    <cofactor evidence="1">
        <name>[4Fe-4S] cluster</name>
        <dbReference type="ChEBI" id="CHEBI:49883"/>
    </cofactor>
    <text evidence="1">Binds 2 [4Fe-4S] clusters. One cluster is coordinated with 3 cysteines and an exchangeable S-adenosyl-L-methionine.</text>
</comment>
<comment type="subcellular location">
    <subcellularLocation>
        <location evidence="1">Cytoplasm</location>
    </subcellularLocation>
</comment>
<comment type="similarity">
    <text evidence="1">Belongs to the methylthiotransferase family. RimO subfamily.</text>
</comment>
<dbReference type="EC" id="2.8.4.4" evidence="1"/>
<dbReference type="EMBL" id="AM420293">
    <property type="protein sequence ID" value="CAM05065.1"/>
    <property type="molecule type" value="Genomic_DNA"/>
</dbReference>
<dbReference type="RefSeq" id="WP_011874874.1">
    <property type="nucleotide sequence ID" value="NC_009142.1"/>
</dbReference>
<dbReference type="SMR" id="A4FLZ0"/>
<dbReference type="STRING" id="405948.SACE_5882"/>
<dbReference type="KEGG" id="sen:SACE_5882"/>
<dbReference type="eggNOG" id="COG0621">
    <property type="taxonomic scope" value="Bacteria"/>
</dbReference>
<dbReference type="HOGENOM" id="CLU_018697_0_1_11"/>
<dbReference type="OrthoDB" id="9805215at2"/>
<dbReference type="Proteomes" id="UP000006728">
    <property type="component" value="Chromosome"/>
</dbReference>
<dbReference type="GO" id="GO:0005829">
    <property type="term" value="C:cytosol"/>
    <property type="evidence" value="ECO:0007669"/>
    <property type="project" value="TreeGrafter"/>
</dbReference>
<dbReference type="GO" id="GO:0051539">
    <property type="term" value="F:4 iron, 4 sulfur cluster binding"/>
    <property type="evidence" value="ECO:0007669"/>
    <property type="project" value="UniProtKB-UniRule"/>
</dbReference>
<dbReference type="GO" id="GO:0035599">
    <property type="term" value="F:aspartic acid methylthiotransferase activity"/>
    <property type="evidence" value="ECO:0007669"/>
    <property type="project" value="TreeGrafter"/>
</dbReference>
<dbReference type="GO" id="GO:0046872">
    <property type="term" value="F:metal ion binding"/>
    <property type="evidence" value="ECO:0007669"/>
    <property type="project" value="UniProtKB-KW"/>
</dbReference>
<dbReference type="GO" id="GO:0103039">
    <property type="term" value="F:protein methylthiotransferase activity"/>
    <property type="evidence" value="ECO:0007669"/>
    <property type="project" value="UniProtKB-EC"/>
</dbReference>
<dbReference type="GO" id="GO:0006400">
    <property type="term" value="P:tRNA modification"/>
    <property type="evidence" value="ECO:0007669"/>
    <property type="project" value="InterPro"/>
</dbReference>
<dbReference type="CDD" id="cd01335">
    <property type="entry name" value="Radical_SAM"/>
    <property type="match status" value="1"/>
</dbReference>
<dbReference type="FunFam" id="3.80.30.20:FF:000001">
    <property type="entry name" value="tRNA-2-methylthio-N(6)-dimethylallyladenosine synthase 2"/>
    <property type="match status" value="1"/>
</dbReference>
<dbReference type="Gene3D" id="3.40.50.12160">
    <property type="entry name" value="Methylthiotransferase, N-terminal domain"/>
    <property type="match status" value="1"/>
</dbReference>
<dbReference type="Gene3D" id="2.40.50.140">
    <property type="entry name" value="Nucleic acid-binding proteins"/>
    <property type="match status" value="1"/>
</dbReference>
<dbReference type="Gene3D" id="3.80.30.20">
    <property type="entry name" value="tm_1862 like domain"/>
    <property type="match status" value="1"/>
</dbReference>
<dbReference type="HAMAP" id="MF_01865">
    <property type="entry name" value="MTTase_RimO"/>
    <property type="match status" value="1"/>
</dbReference>
<dbReference type="InterPro" id="IPR006638">
    <property type="entry name" value="Elp3/MiaA/NifB-like_rSAM"/>
</dbReference>
<dbReference type="InterPro" id="IPR005839">
    <property type="entry name" value="Methylthiotransferase"/>
</dbReference>
<dbReference type="InterPro" id="IPR020612">
    <property type="entry name" value="Methylthiotransferase_CS"/>
</dbReference>
<dbReference type="InterPro" id="IPR013848">
    <property type="entry name" value="Methylthiotransferase_N"/>
</dbReference>
<dbReference type="InterPro" id="IPR038135">
    <property type="entry name" value="Methylthiotransferase_N_sf"/>
</dbReference>
<dbReference type="InterPro" id="IPR012340">
    <property type="entry name" value="NA-bd_OB-fold"/>
</dbReference>
<dbReference type="InterPro" id="IPR005840">
    <property type="entry name" value="Ribosomal_uS12_MeSTrfase_RimO"/>
</dbReference>
<dbReference type="InterPro" id="IPR007197">
    <property type="entry name" value="rSAM"/>
</dbReference>
<dbReference type="InterPro" id="IPR023404">
    <property type="entry name" value="rSAM_horseshoe"/>
</dbReference>
<dbReference type="InterPro" id="IPR002792">
    <property type="entry name" value="TRAM_dom"/>
</dbReference>
<dbReference type="NCBIfam" id="TIGR01125">
    <property type="entry name" value="30S ribosomal protein S12 methylthiotransferase RimO"/>
    <property type="match status" value="1"/>
</dbReference>
<dbReference type="NCBIfam" id="TIGR00089">
    <property type="entry name" value="MiaB/RimO family radical SAM methylthiotransferase"/>
    <property type="match status" value="1"/>
</dbReference>
<dbReference type="PANTHER" id="PTHR43837">
    <property type="entry name" value="RIBOSOMAL PROTEIN S12 METHYLTHIOTRANSFERASE RIMO"/>
    <property type="match status" value="1"/>
</dbReference>
<dbReference type="PANTHER" id="PTHR43837:SF1">
    <property type="entry name" value="RIBOSOMAL PROTEIN US12 METHYLTHIOTRANSFERASE RIMO"/>
    <property type="match status" value="1"/>
</dbReference>
<dbReference type="Pfam" id="PF04055">
    <property type="entry name" value="Radical_SAM"/>
    <property type="match status" value="1"/>
</dbReference>
<dbReference type="Pfam" id="PF18693">
    <property type="entry name" value="TRAM_2"/>
    <property type="match status" value="1"/>
</dbReference>
<dbReference type="Pfam" id="PF00919">
    <property type="entry name" value="UPF0004"/>
    <property type="match status" value="1"/>
</dbReference>
<dbReference type="SFLD" id="SFLDG01082">
    <property type="entry name" value="B12-binding_domain_containing"/>
    <property type="match status" value="1"/>
</dbReference>
<dbReference type="SFLD" id="SFLDG01061">
    <property type="entry name" value="methylthiotransferase"/>
    <property type="match status" value="1"/>
</dbReference>
<dbReference type="SFLD" id="SFLDF00274">
    <property type="entry name" value="ribosomal_protein_S12_methylth"/>
    <property type="match status" value="1"/>
</dbReference>
<dbReference type="SMART" id="SM00729">
    <property type="entry name" value="Elp3"/>
    <property type="match status" value="1"/>
</dbReference>
<dbReference type="SUPFAM" id="SSF102114">
    <property type="entry name" value="Radical SAM enzymes"/>
    <property type="match status" value="1"/>
</dbReference>
<dbReference type="PROSITE" id="PS51449">
    <property type="entry name" value="MTTASE_N"/>
    <property type="match status" value="1"/>
</dbReference>
<dbReference type="PROSITE" id="PS01278">
    <property type="entry name" value="MTTASE_RADICAL"/>
    <property type="match status" value="1"/>
</dbReference>
<dbReference type="PROSITE" id="PS51918">
    <property type="entry name" value="RADICAL_SAM"/>
    <property type="match status" value="1"/>
</dbReference>
<dbReference type="PROSITE" id="PS50926">
    <property type="entry name" value="TRAM"/>
    <property type="match status" value="1"/>
</dbReference>
<protein>
    <recommendedName>
        <fullName evidence="1">Ribosomal protein uS12 methylthiotransferase RimO</fullName>
        <shortName evidence="1">uS12 MTTase</shortName>
        <shortName evidence="1">uS12 methylthiotransferase</shortName>
        <ecNumber evidence="1">2.8.4.4</ecNumber>
    </recommendedName>
    <alternativeName>
        <fullName evidence="1">Ribosomal protein uS12 (aspartate-C(3))-methylthiotransferase</fullName>
    </alternativeName>
    <alternativeName>
        <fullName evidence="1">Ribosome maturation factor RimO</fullName>
    </alternativeName>
</protein>
<sequence>MSAEHSSRRVAMVTLGCARNEVDSEELAGNLHQRGWDLIDDESSADVVVVNTCGFVESAKKDSVDTLLAASDTGAKVVAVGCMAERYGAELAEHLPEADAVLGFDHYGNLAERLDDVLAGRAIQPHQPQDRRKMLPITPVARPAAAAASEVAVPGHGWVPSTRGIARRRLDDSPLAALKLASGCDRRCSFCAIPSFRGSFLSRQPEEVLGEAAWLAEQGAKELFLVSENSTSYGKDLSDPRALETLLPRLAGIDGVDRVRVSYLQPAETRPGLVRAIATTPGVAPYFDLSFQHSSEKVLRRMRRFGSTESFLALIEQIRELAPEAGIRSNVIVGFPGETEEDFEELQDFLTRARLDAVGVFGYSDEDGTEAAGFDGKLDADVVAARVEQVSALADELVAQRAEDRVGTEVRVLVERDEDGEVTGRAEHQGPEVDGECVVVDAGGAGVGEVVHCRVIASEGVDLVVRPVGAAQDSSQLRGAGEGS</sequence>
<name>RIMO_SACEN</name>
<organism>
    <name type="scientific">Saccharopolyspora erythraea (strain ATCC 11635 / DSM 40517 / JCM 4748 / NBRC 13426 / NCIMB 8594 / NRRL 2338)</name>
    <dbReference type="NCBI Taxonomy" id="405948"/>
    <lineage>
        <taxon>Bacteria</taxon>
        <taxon>Bacillati</taxon>
        <taxon>Actinomycetota</taxon>
        <taxon>Actinomycetes</taxon>
        <taxon>Pseudonocardiales</taxon>
        <taxon>Pseudonocardiaceae</taxon>
        <taxon>Saccharopolyspora</taxon>
    </lineage>
</organism>
<proteinExistence type="inferred from homology"/>
<reference key="1">
    <citation type="journal article" date="2007" name="Nat. Biotechnol.">
        <title>Complete genome sequence of the erythromycin-producing bacterium Saccharopolyspora erythraea NRRL23338.</title>
        <authorList>
            <person name="Oliynyk M."/>
            <person name="Samborskyy M."/>
            <person name="Lester J.B."/>
            <person name="Mironenko T."/>
            <person name="Scott N."/>
            <person name="Dickens S."/>
            <person name="Haydock S.F."/>
            <person name="Leadlay P.F."/>
        </authorList>
    </citation>
    <scope>NUCLEOTIDE SEQUENCE [LARGE SCALE GENOMIC DNA]</scope>
    <source>
        <strain>ATCC 11635 / DSM 40517 / JCM 4748 / NBRC 13426 / NCIMB 8594 / NRRL 2338</strain>
    </source>
</reference>
<keyword id="KW-0004">4Fe-4S</keyword>
<keyword id="KW-0963">Cytoplasm</keyword>
<keyword id="KW-0408">Iron</keyword>
<keyword id="KW-0411">Iron-sulfur</keyword>
<keyword id="KW-0479">Metal-binding</keyword>
<keyword id="KW-1185">Reference proteome</keyword>
<keyword id="KW-0949">S-adenosyl-L-methionine</keyword>
<keyword id="KW-0808">Transferase</keyword>
<feature type="chain" id="PRO_0000374982" description="Ribosomal protein uS12 methylthiotransferase RimO">
    <location>
        <begin position="1"/>
        <end position="484"/>
    </location>
</feature>
<feature type="domain" description="MTTase N-terminal" evidence="1">
    <location>
        <begin position="8"/>
        <end position="119"/>
    </location>
</feature>
<feature type="domain" description="Radical SAM core" evidence="2">
    <location>
        <begin position="170"/>
        <end position="401"/>
    </location>
</feature>
<feature type="domain" description="TRAM" evidence="1">
    <location>
        <begin position="403"/>
        <end position="469"/>
    </location>
</feature>
<feature type="binding site" evidence="1">
    <location>
        <position position="17"/>
    </location>
    <ligand>
        <name>[4Fe-4S] cluster</name>
        <dbReference type="ChEBI" id="CHEBI:49883"/>
        <label>1</label>
    </ligand>
</feature>
<feature type="binding site" evidence="1">
    <location>
        <position position="53"/>
    </location>
    <ligand>
        <name>[4Fe-4S] cluster</name>
        <dbReference type="ChEBI" id="CHEBI:49883"/>
        <label>1</label>
    </ligand>
</feature>
<feature type="binding site" evidence="1">
    <location>
        <position position="82"/>
    </location>
    <ligand>
        <name>[4Fe-4S] cluster</name>
        <dbReference type="ChEBI" id="CHEBI:49883"/>
        <label>1</label>
    </ligand>
</feature>
<feature type="binding site" evidence="1">
    <location>
        <position position="184"/>
    </location>
    <ligand>
        <name>[4Fe-4S] cluster</name>
        <dbReference type="ChEBI" id="CHEBI:49883"/>
        <label>2</label>
        <note>4Fe-4S-S-AdoMet</note>
    </ligand>
</feature>
<feature type="binding site" evidence="1">
    <location>
        <position position="188"/>
    </location>
    <ligand>
        <name>[4Fe-4S] cluster</name>
        <dbReference type="ChEBI" id="CHEBI:49883"/>
        <label>2</label>
        <note>4Fe-4S-S-AdoMet</note>
    </ligand>
</feature>
<feature type="binding site" evidence="1">
    <location>
        <position position="191"/>
    </location>
    <ligand>
        <name>[4Fe-4S] cluster</name>
        <dbReference type="ChEBI" id="CHEBI:49883"/>
        <label>2</label>
        <note>4Fe-4S-S-AdoMet</note>
    </ligand>
</feature>
<gene>
    <name evidence="1" type="primary">rimO</name>
    <name type="ordered locus">SACE_5882</name>
</gene>
<accession>A4FLZ0</accession>
<evidence type="ECO:0000255" key="1">
    <source>
        <dbReference type="HAMAP-Rule" id="MF_01865"/>
    </source>
</evidence>
<evidence type="ECO:0000255" key="2">
    <source>
        <dbReference type="PROSITE-ProRule" id="PRU01266"/>
    </source>
</evidence>